<gene>
    <name evidence="1" type="primary">pth</name>
    <name type="ordered locus">BMA10247_2928</name>
</gene>
<dbReference type="EC" id="3.1.1.29" evidence="1"/>
<dbReference type="EMBL" id="CP000548">
    <property type="protein sequence ID" value="ABO04757.1"/>
    <property type="molecule type" value="Genomic_DNA"/>
</dbReference>
<dbReference type="RefSeq" id="WP_004202941.1">
    <property type="nucleotide sequence ID" value="NZ_CP007802.1"/>
</dbReference>
<dbReference type="SMR" id="A3MQB3"/>
<dbReference type="GeneID" id="93059040"/>
<dbReference type="KEGG" id="bmaz:BM44_418"/>
<dbReference type="KEGG" id="bmn:BMA10247_2928"/>
<dbReference type="PATRIC" id="fig|320389.8.peg.459"/>
<dbReference type="GO" id="GO:0005737">
    <property type="term" value="C:cytoplasm"/>
    <property type="evidence" value="ECO:0007669"/>
    <property type="project" value="UniProtKB-SubCell"/>
</dbReference>
<dbReference type="GO" id="GO:0004045">
    <property type="term" value="F:peptidyl-tRNA hydrolase activity"/>
    <property type="evidence" value="ECO:0007669"/>
    <property type="project" value="UniProtKB-UniRule"/>
</dbReference>
<dbReference type="GO" id="GO:0000049">
    <property type="term" value="F:tRNA binding"/>
    <property type="evidence" value="ECO:0007669"/>
    <property type="project" value="UniProtKB-UniRule"/>
</dbReference>
<dbReference type="GO" id="GO:0006515">
    <property type="term" value="P:protein quality control for misfolded or incompletely synthesized proteins"/>
    <property type="evidence" value="ECO:0007669"/>
    <property type="project" value="UniProtKB-UniRule"/>
</dbReference>
<dbReference type="GO" id="GO:0072344">
    <property type="term" value="P:rescue of stalled ribosome"/>
    <property type="evidence" value="ECO:0007669"/>
    <property type="project" value="UniProtKB-UniRule"/>
</dbReference>
<dbReference type="CDD" id="cd00462">
    <property type="entry name" value="PTH"/>
    <property type="match status" value="1"/>
</dbReference>
<dbReference type="FunFam" id="3.40.50.1470:FF:000001">
    <property type="entry name" value="Peptidyl-tRNA hydrolase"/>
    <property type="match status" value="1"/>
</dbReference>
<dbReference type="Gene3D" id="3.40.50.1470">
    <property type="entry name" value="Peptidyl-tRNA hydrolase"/>
    <property type="match status" value="1"/>
</dbReference>
<dbReference type="HAMAP" id="MF_00083">
    <property type="entry name" value="Pept_tRNA_hydro_bact"/>
    <property type="match status" value="1"/>
</dbReference>
<dbReference type="InterPro" id="IPR001328">
    <property type="entry name" value="Pept_tRNA_hydro"/>
</dbReference>
<dbReference type="InterPro" id="IPR018171">
    <property type="entry name" value="Pept_tRNA_hydro_CS"/>
</dbReference>
<dbReference type="InterPro" id="IPR036416">
    <property type="entry name" value="Pept_tRNA_hydro_sf"/>
</dbReference>
<dbReference type="NCBIfam" id="TIGR00447">
    <property type="entry name" value="pth"/>
    <property type="match status" value="1"/>
</dbReference>
<dbReference type="PANTHER" id="PTHR17224">
    <property type="entry name" value="PEPTIDYL-TRNA HYDROLASE"/>
    <property type="match status" value="1"/>
</dbReference>
<dbReference type="PANTHER" id="PTHR17224:SF1">
    <property type="entry name" value="PEPTIDYL-TRNA HYDROLASE"/>
    <property type="match status" value="1"/>
</dbReference>
<dbReference type="Pfam" id="PF01195">
    <property type="entry name" value="Pept_tRNA_hydro"/>
    <property type="match status" value="1"/>
</dbReference>
<dbReference type="SUPFAM" id="SSF53178">
    <property type="entry name" value="Peptidyl-tRNA hydrolase-like"/>
    <property type="match status" value="1"/>
</dbReference>
<dbReference type="PROSITE" id="PS01195">
    <property type="entry name" value="PEPT_TRNA_HYDROL_1"/>
    <property type="match status" value="1"/>
</dbReference>
<dbReference type="PROSITE" id="PS01196">
    <property type="entry name" value="PEPT_TRNA_HYDROL_2"/>
    <property type="match status" value="1"/>
</dbReference>
<sequence>MIKLIVGLGNPGAEYTATRHNAGFWLVDQLAREAGATLRDERRFHGFYAKARLFGEEVHLLEPQTYMNRSGQAVVALAHFFKILPTEILVAHDELDLPPGAAKLKLGGGSGGHNGLKDISAHLSSQQYWRLRIGIGHPRDLIPESARAGAKPDVANFVLKPPRKDEQDLIDAAIERALAVMPTAIKGETERAMMQLHRNGA</sequence>
<feature type="chain" id="PRO_1000010571" description="Peptidyl-tRNA hydrolase">
    <location>
        <begin position="1"/>
        <end position="201"/>
    </location>
</feature>
<feature type="active site" description="Proton acceptor" evidence="1">
    <location>
        <position position="20"/>
    </location>
</feature>
<feature type="binding site" evidence="1">
    <location>
        <position position="15"/>
    </location>
    <ligand>
        <name>tRNA</name>
        <dbReference type="ChEBI" id="CHEBI:17843"/>
    </ligand>
</feature>
<feature type="binding site" evidence="1">
    <location>
        <position position="66"/>
    </location>
    <ligand>
        <name>tRNA</name>
        <dbReference type="ChEBI" id="CHEBI:17843"/>
    </ligand>
</feature>
<feature type="binding site" evidence="1">
    <location>
        <position position="68"/>
    </location>
    <ligand>
        <name>tRNA</name>
        <dbReference type="ChEBI" id="CHEBI:17843"/>
    </ligand>
</feature>
<feature type="binding site" evidence="1">
    <location>
        <position position="114"/>
    </location>
    <ligand>
        <name>tRNA</name>
        <dbReference type="ChEBI" id="CHEBI:17843"/>
    </ligand>
</feature>
<feature type="site" description="Discriminates between blocked and unblocked aminoacyl-tRNA" evidence="1">
    <location>
        <position position="10"/>
    </location>
</feature>
<feature type="site" description="Stabilizes the basic form of H active site to accept a proton" evidence="1">
    <location>
        <position position="93"/>
    </location>
</feature>
<evidence type="ECO:0000255" key="1">
    <source>
        <dbReference type="HAMAP-Rule" id="MF_00083"/>
    </source>
</evidence>
<name>PTH_BURM7</name>
<reference key="1">
    <citation type="journal article" date="2010" name="Genome Biol. Evol.">
        <title>Continuing evolution of Burkholderia mallei through genome reduction and large-scale rearrangements.</title>
        <authorList>
            <person name="Losada L."/>
            <person name="Ronning C.M."/>
            <person name="DeShazer D."/>
            <person name="Woods D."/>
            <person name="Fedorova N."/>
            <person name="Kim H.S."/>
            <person name="Shabalina S.A."/>
            <person name="Pearson T.R."/>
            <person name="Brinkac L."/>
            <person name="Tan P."/>
            <person name="Nandi T."/>
            <person name="Crabtree J."/>
            <person name="Badger J."/>
            <person name="Beckstrom-Sternberg S."/>
            <person name="Saqib M."/>
            <person name="Schutzer S.E."/>
            <person name="Keim P."/>
            <person name="Nierman W.C."/>
        </authorList>
    </citation>
    <scope>NUCLEOTIDE SEQUENCE [LARGE SCALE GENOMIC DNA]</scope>
    <source>
        <strain>NCTC 10247</strain>
    </source>
</reference>
<proteinExistence type="inferred from homology"/>
<protein>
    <recommendedName>
        <fullName evidence="1">Peptidyl-tRNA hydrolase</fullName>
        <shortName evidence="1">Pth</shortName>
        <ecNumber evidence="1">3.1.1.29</ecNumber>
    </recommendedName>
</protein>
<organism>
    <name type="scientific">Burkholderia mallei (strain NCTC 10247)</name>
    <dbReference type="NCBI Taxonomy" id="320389"/>
    <lineage>
        <taxon>Bacteria</taxon>
        <taxon>Pseudomonadati</taxon>
        <taxon>Pseudomonadota</taxon>
        <taxon>Betaproteobacteria</taxon>
        <taxon>Burkholderiales</taxon>
        <taxon>Burkholderiaceae</taxon>
        <taxon>Burkholderia</taxon>
        <taxon>pseudomallei group</taxon>
    </lineage>
</organism>
<accession>A3MQB3</accession>
<keyword id="KW-0963">Cytoplasm</keyword>
<keyword id="KW-0378">Hydrolase</keyword>
<keyword id="KW-0694">RNA-binding</keyword>
<keyword id="KW-0820">tRNA-binding</keyword>
<comment type="function">
    <text evidence="1">Hydrolyzes ribosome-free peptidyl-tRNAs (with 1 or more amino acids incorporated), which drop off the ribosome during protein synthesis, or as a result of ribosome stalling.</text>
</comment>
<comment type="function">
    <text evidence="1">Catalyzes the release of premature peptidyl moieties from peptidyl-tRNA molecules trapped in stalled 50S ribosomal subunits, and thus maintains levels of free tRNAs and 50S ribosomes.</text>
</comment>
<comment type="catalytic activity">
    <reaction evidence="1">
        <text>an N-acyl-L-alpha-aminoacyl-tRNA + H2O = an N-acyl-L-amino acid + a tRNA + H(+)</text>
        <dbReference type="Rhea" id="RHEA:54448"/>
        <dbReference type="Rhea" id="RHEA-COMP:10123"/>
        <dbReference type="Rhea" id="RHEA-COMP:13883"/>
        <dbReference type="ChEBI" id="CHEBI:15377"/>
        <dbReference type="ChEBI" id="CHEBI:15378"/>
        <dbReference type="ChEBI" id="CHEBI:59874"/>
        <dbReference type="ChEBI" id="CHEBI:78442"/>
        <dbReference type="ChEBI" id="CHEBI:138191"/>
        <dbReference type="EC" id="3.1.1.29"/>
    </reaction>
</comment>
<comment type="subunit">
    <text evidence="1">Monomer.</text>
</comment>
<comment type="subcellular location">
    <subcellularLocation>
        <location evidence="1">Cytoplasm</location>
    </subcellularLocation>
</comment>
<comment type="similarity">
    <text evidence="1">Belongs to the PTH family.</text>
</comment>